<accession>Q4R3A0</accession>
<gene>
    <name type="primary">TPPP2</name>
    <name type="ORF">QtsA-18383</name>
</gene>
<comment type="function">
    <text evidence="1 2">Probable regulator of microtubule dynamics required for sperm motility (By similarity). In contrast to other members of the family, has no microtubule bundling activity (By similarity).</text>
</comment>
<comment type="subcellular location">
    <subcellularLocation>
        <location evidence="1">Cytoplasm</location>
        <location evidence="1">Cytosol</location>
    </subcellularLocation>
    <subcellularLocation>
        <location evidence="2">Cell projection</location>
        <location evidence="2">Cilium</location>
        <location evidence="2">Flagellum</location>
    </subcellularLocation>
    <text evidence="2">Present in the middle piece of sperm tail.</text>
</comment>
<comment type="similarity">
    <text evidence="4">Belongs to the TPPP family.</text>
</comment>
<dbReference type="EMBL" id="AB179366">
    <property type="protein sequence ID" value="BAE02417.1"/>
    <property type="molecule type" value="mRNA"/>
</dbReference>
<dbReference type="RefSeq" id="NP_001272207.1">
    <property type="nucleotide sequence ID" value="NM_001285278.1"/>
</dbReference>
<dbReference type="RefSeq" id="XP_005560799.1">
    <property type="nucleotide sequence ID" value="XM_005560742.1"/>
</dbReference>
<dbReference type="RefSeq" id="XP_015308720.1">
    <property type="nucleotide sequence ID" value="XM_015453234.1"/>
</dbReference>
<dbReference type="RefSeq" id="XP_045252037.1">
    <property type="nucleotide sequence ID" value="XM_045396102.2"/>
</dbReference>
<dbReference type="RefSeq" id="XP_065404659.1">
    <property type="nucleotide sequence ID" value="XM_065548587.1"/>
</dbReference>
<dbReference type="RefSeq" id="XP_065404660.1">
    <property type="nucleotide sequence ID" value="XM_065548588.1"/>
</dbReference>
<dbReference type="SMR" id="Q4R3A0"/>
<dbReference type="STRING" id="9541.ENSMFAP00000003313"/>
<dbReference type="Ensembl" id="ENSMFAT00000021973.2">
    <property type="protein sequence ID" value="ENSMFAP00000003313.1"/>
    <property type="gene ID" value="ENSMFAG00000001424.2"/>
</dbReference>
<dbReference type="GeneID" id="101925360"/>
<dbReference type="VEuPathDB" id="HostDB:ENSMFAG00000001424"/>
<dbReference type="eggNOG" id="KOG4070">
    <property type="taxonomic scope" value="Eukaryota"/>
</dbReference>
<dbReference type="GeneTree" id="ENSGT00940000153875"/>
<dbReference type="OMA" id="KELGQMR"/>
<dbReference type="Proteomes" id="UP000233100">
    <property type="component" value="Chromosome 7"/>
</dbReference>
<dbReference type="Bgee" id="ENSMFAG00000001424">
    <property type="expression patterns" value="Expressed in multicellular organism"/>
</dbReference>
<dbReference type="GO" id="GO:0005829">
    <property type="term" value="C:cytosol"/>
    <property type="evidence" value="ECO:0007669"/>
    <property type="project" value="UniProtKB-SubCell"/>
</dbReference>
<dbReference type="GO" id="GO:0005874">
    <property type="term" value="C:microtubule"/>
    <property type="evidence" value="ECO:0007669"/>
    <property type="project" value="TreeGrafter"/>
</dbReference>
<dbReference type="GO" id="GO:0036126">
    <property type="term" value="C:sperm flagellum"/>
    <property type="evidence" value="ECO:0000250"/>
    <property type="project" value="UniProtKB"/>
</dbReference>
<dbReference type="GO" id="GO:0015631">
    <property type="term" value="F:tubulin binding"/>
    <property type="evidence" value="ECO:0007669"/>
    <property type="project" value="Ensembl"/>
</dbReference>
<dbReference type="GO" id="GO:0030154">
    <property type="term" value="P:cell differentiation"/>
    <property type="evidence" value="ECO:0007669"/>
    <property type="project" value="UniProtKB-KW"/>
</dbReference>
<dbReference type="GO" id="GO:0001578">
    <property type="term" value="P:microtubule bundle formation"/>
    <property type="evidence" value="ECO:0007669"/>
    <property type="project" value="TreeGrafter"/>
</dbReference>
<dbReference type="GO" id="GO:0046785">
    <property type="term" value="P:microtubule polymerization"/>
    <property type="evidence" value="ECO:0007669"/>
    <property type="project" value="InterPro"/>
</dbReference>
<dbReference type="GO" id="GO:0032273">
    <property type="term" value="P:positive regulation of protein polymerization"/>
    <property type="evidence" value="ECO:0007669"/>
    <property type="project" value="TreeGrafter"/>
</dbReference>
<dbReference type="GO" id="GO:1901317">
    <property type="term" value="P:regulation of flagellated sperm motility"/>
    <property type="evidence" value="ECO:0000250"/>
    <property type="project" value="UniProtKB"/>
</dbReference>
<dbReference type="GO" id="GO:0007283">
    <property type="term" value="P:spermatogenesis"/>
    <property type="evidence" value="ECO:0007669"/>
    <property type="project" value="UniProtKB-KW"/>
</dbReference>
<dbReference type="FunFam" id="1.10.238.10:FF:000057">
    <property type="entry name" value="Tubulin polymerization-promoting protein family member 3"/>
    <property type="match status" value="1"/>
</dbReference>
<dbReference type="Gene3D" id="1.10.238.10">
    <property type="entry name" value="EF-hand"/>
    <property type="match status" value="1"/>
</dbReference>
<dbReference type="InterPro" id="IPR011992">
    <property type="entry name" value="EF-hand-dom_pair"/>
</dbReference>
<dbReference type="InterPro" id="IPR008907">
    <property type="entry name" value="TPP/p25"/>
</dbReference>
<dbReference type="PANTHER" id="PTHR12932">
    <property type="entry name" value="P25 ALPHA-RELATED"/>
    <property type="match status" value="1"/>
</dbReference>
<dbReference type="PANTHER" id="PTHR12932:SF21">
    <property type="entry name" value="TUBULIN POLYMERIZATION-PROMOTING PROTEIN FAMILY MEMBER 2"/>
    <property type="match status" value="1"/>
</dbReference>
<dbReference type="Pfam" id="PF05517">
    <property type="entry name" value="p25-alpha"/>
    <property type="match status" value="1"/>
</dbReference>
<dbReference type="SUPFAM" id="SSF47473">
    <property type="entry name" value="EF-hand"/>
    <property type="match status" value="1"/>
</dbReference>
<protein>
    <recommendedName>
        <fullName>Tubulin polymerization-promoting protein family member 2</fullName>
    </recommendedName>
</protein>
<evidence type="ECO:0000250" key="1">
    <source>
        <dbReference type="UniProtKB" id="P59282"/>
    </source>
</evidence>
<evidence type="ECO:0000250" key="2">
    <source>
        <dbReference type="UniProtKB" id="Q0P5Y3"/>
    </source>
</evidence>
<evidence type="ECO:0000256" key="3">
    <source>
        <dbReference type="SAM" id="MobiDB-lite"/>
    </source>
</evidence>
<evidence type="ECO:0000305" key="4"/>
<reference key="1">
    <citation type="submission" date="2005-06" db="EMBL/GenBank/DDBJ databases">
        <title>DNA sequences of macaque genes expressed in brain or testis and its evolutionary implications.</title>
        <authorList>
            <consortium name="International consortium for macaque cDNA sequencing and analysis"/>
        </authorList>
    </citation>
    <scope>NUCLEOTIDE SEQUENCE [LARGE SCALE MRNA]</scope>
    <source>
        <tissue>Testis</tissue>
    </source>
</reference>
<name>TPPP2_MACFA</name>
<organism>
    <name type="scientific">Macaca fascicularis</name>
    <name type="common">Crab-eating macaque</name>
    <name type="synonym">Cynomolgus monkey</name>
    <dbReference type="NCBI Taxonomy" id="9541"/>
    <lineage>
        <taxon>Eukaryota</taxon>
        <taxon>Metazoa</taxon>
        <taxon>Chordata</taxon>
        <taxon>Craniata</taxon>
        <taxon>Vertebrata</taxon>
        <taxon>Euteleostomi</taxon>
        <taxon>Mammalia</taxon>
        <taxon>Eutheria</taxon>
        <taxon>Euarchontoglires</taxon>
        <taxon>Primates</taxon>
        <taxon>Haplorrhini</taxon>
        <taxon>Catarrhini</taxon>
        <taxon>Cercopithecidae</taxon>
        <taxon>Cercopithecinae</taxon>
        <taxon>Macaca</taxon>
    </lineage>
</organism>
<sequence length="170" mass="18420">MASEAEKTFNRFAAFGESSSSGTEMNNKNFSKLCKDCGIMDGKTVTSTDVDIVFSKVKAKNARTITFQQFKEAVKELGQKRFKGKSPDEVLESIYGLMEGKDPATTGATKATTVGAVDRLTDTSKYTGTHKERFDESGKGKGIAGREVMNDNTGYVSGYKGAGTYDKKTK</sequence>
<keyword id="KW-0966">Cell projection</keyword>
<keyword id="KW-0969">Cilium</keyword>
<keyword id="KW-0963">Cytoplasm</keyword>
<keyword id="KW-0221">Differentiation</keyword>
<keyword id="KW-0282">Flagellum</keyword>
<keyword id="KW-1185">Reference proteome</keyword>
<keyword id="KW-0744">Spermatogenesis</keyword>
<proteinExistence type="evidence at transcript level"/>
<feature type="chain" id="PRO_0000289003" description="Tubulin polymerization-promoting protein family member 2">
    <location>
        <begin position="1"/>
        <end position="170"/>
    </location>
</feature>
<feature type="region of interest" description="Disordered" evidence="3">
    <location>
        <begin position="127"/>
        <end position="147"/>
    </location>
</feature>
<feature type="compositionally biased region" description="Basic and acidic residues" evidence="3">
    <location>
        <begin position="129"/>
        <end position="139"/>
    </location>
</feature>